<accession>Q1XDF5</accession>
<sequence>MKANSTKLSQLMKSVEIPFIKTEVPEIKVGDTIQLGLMVKEGSKTREQLCEGVVLARRRKKSLNTSLTLRCSFQGIGVERVFFLNSPRITFVKVIRRAKIRRAKLYYLRDLLGKAGRLKQIFN</sequence>
<keyword id="KW-0150">Chloroplast</keyword>
<keyword id="KW-0934">Plastid</keyword>
<keyword id="KW-0687">Ribonucleoprotein</keyword>
<keyword id="KW-0689">Ribosomal protein</keyword>
<gene>
    <name evidence="1" type="primary">rpl19</name>
</gene>
<protein>
    <recommendedName>
        <fullName evidence="1">Large ribosomal subunit protein bL19c</fullName>
    </recommendedName>
    <alternativeName>
        <fullName evidence="2">50S ribosomal protein L19, chloroplastic</fullName>
    </alternativeName>
</protein>
<proteinExistence type="inferred from homology"/>
<comment type="subcellular location">
    <subcellularLocation>
        <location>Plastid</location>
        <location>Chloroplast</location>
    </subcellularLocation>
</comment>
<comment type="similarity">
    <text evidence="1">Belongs to the bacterial ribosomal protein bL19 family.</text>
</comment>
<name>RK19_PYRYE</name>
<evidence type="ECO:0000255" key="1">
    <source>
        <dbReference type="HAMAP-Rule" id="MF_00402"/>
    </source>
</evidence>
<evidence type="ECO:0000305" key="2"/>
<feature type="chain" id="PRO_0000276395" description="Large ribosomal subunit protein bL19c">
    <location>
        <begin position="1"/>
        <end position="123"/>
    </location>
</feature>
<geneLocation type="chloroplast"/>
<reference key="1">
    <citation type="submission" date="2003-11" db="EMBL/GenBank/DDBJ databases">
        <title>Whole genome sequence of Porphyra yezoensis chloroplast.</title>
        <authorList>
            <person name="Kunimoto M."/>
            <person name="Morishima K."/>
            <person name="Yoshikawa M."/>
            <person name="Fukuda S."/>
            <person name="Kobayashi T."/>
            <person name="Kobayashi M."/>
            <person name="Okazaki T."/>
            <person name="Ohara I."/>
            <person name="Nakayama I."/>
        </authorList>
    </citation>
    <scope>NUCLEOTIDE SEQUENCE [LARGE SCALE GENOMIC DNA]</scope>
    <source>
        <strain>U-51</strain>
    </source>
</reference>
<organism>
    <name type="scientific">Pyropia yezoensis</name>
    <name type="common">Susabi-nori</name>
    <name type="synonym">Porphyra yezoensis</name>
    <dbReference type="NCBI Taxonomy" id="2788"/>
    <lineage>
        <taxon>Eukaryota</taxon>
        <taxon>Rhodophyta</taxon>
        <taxon>Bangiophyceae</taxon>
        <taxon>Bangiales</taxon>
        <taxon>Bangiaceae</taxon>
        <taxon>Pyropia</taxon>
    </lineage>
</organism>
<dbReference type="EMBL" id="AP006715">
    <property type="protein sequence ID" value="BAE92456.1"/>
    <property type="molecule type" value="Genomic_DNA"/>
</dbReference>
<dbReference type="RefSeq" id="YP_537013.1">
    <property type="nucleotide sequence ID" value="NC_007932.1"/>
</dbReference>
<dbReference type="SMR" id="Q1XDF5"/>
<dbReference type="GeneID" id="3978861"/>
<dbReference type="GO" id="GO:0009507">
    <property type="term" value="C:chloroplast"/>
    <property type="evidence" value="ECO:0007669"/>
    <property type="project" value="UniProtKB-SubCell"/>
</dbReference>
<dbReference type="GO" id="GO:0005762">
    <property type="term" value="C:mitochondrial large ribosomal subunit"/>
    <property type="evidence" value="ECO:0007669"/>
    <property type="project" value="TreeGrafter"/>
</dbReference>
<dbReference type="GO" id="GO:0003735">
    <property type="term" value="F:structural constituent of ribosome"/>
    <property type="evidence" value="ECO:0007669"/>
    <property type="project" value="InterPro"/>
</dbReference>
<dbReference type="GO" id="GO:0006412">
    <property type="term" value="P:translation"/>
    <property type="evidence" value="ECO:0007669"/>
    <property type="project" value="UniProtKB-UniRule"/>
</dbReference>
<dbReference type="Gene3D" id="2.30.30.790">
    <property type="match status" value="1"/>
</dbReference>
<dbReference type="HAMAP" id="MF_00402">
    <property type="entry name" value="Ribosomal_bL19"/>
    <property type="match status" value="1"/>
</dbReference>
<dbReference type="InterPro" id="IPR001857">
    <property type="entry name" value="Ribosomal_bL19"/>
</dbReference>
<dbReference type="InterPro" id="IPR018257">
    <property type="entry name" value="Ribosomal_bL19_CS"/>
</dbReference>
<dbReference type="InterPro" id="IPR038657">
    <property type="entry name" value="Ribosomal_bL19_sf"/>
</dbReference>
<dbReference type="InterPro" id="IPR008991">
    <property type="entry name" value="Translation_prot_SH3-like_sf"/>
</dbReference>
<dbReference type="NCBIfam" id="TIGR01024">
    <property type="entry name" value="rplS_bact"/>
    <property type="match status" value="1"/>
</dbReference>
<dbReference type="PANTHER" id="PTHR15680:SF9">
    <property type="entry name" value="LARGE RIBOSOMAL SUBUNIT PROTEIN BL19M"/>
    <property type="match status" value="1"/>
</dbReference>
<dbReference type="PANTHER" id="PTHR15680">
    <property type="entry name" value="RIBOSOMAL PROTEIN L19"/>
    <property type="match status" value="1"/>
</dbReference>
<dbReference type="Pfam" id="PF01245">
    <property type="entry name" value="Ribosomal_L19"/>
    <property type="match status" value="1"/>
</dbReference>
<dbReference type="PIRSF" id="PIRSF002191">
    <property type="entry name" value="Ribosomal_L19"/>
    <property type="match status" value="1"/>
</dbReference>
<dbReference type="PRINTS" id="PR00061">
    <property type="entry name" value="RIBOSOMALL19"/>
</dbReference>
<dbReference type="SUPFAM" id="SSF50104">
    <property type="entry name" value="Translation proteins SH3-like domain"/>
    <property type="match status" value="1"/>
</dbReference>
<dbReference type="PROSITE" id="PS01015">
    <property type="entry name" value="RIBOSOMAL_L19"/>
    <property type="match status" value="1"/>
</dbReference>